<accession>B0VE45</accession>
<evidence type="ECO:0000255" key="1">
    <source>
        <dbReference type="HAMAP-Rule" id="MF_01621"/>
    </source>
</evidence>
<comment type="function">
    <text evidence="1">Involved in the aerobic and anaerobic degradation of long-chain fatty acids via beta-oxidation cycle. Catalyzes the formation of 3-oxoacyl-CoA from enoyl-CoA via L-3-hydroxyacyl-CoA. It can also use D-3-hydroxyacyl-CoA and cis-3-enoyl-CoA as substrate.</text>
</comment>
<comment type="catalytic activity">
    <reaction evidence="1">
        <text>a (3S)-3-hydroxyacyl-CoA + NAD(+) = a 3-oxoacyl-CoA + NADH + H(+)</text>
        <dbReference type="Rhea" id="RHEA:22432"/>
        <dbReference type="ChEBI" id="CHEBI:15378"/>
        <dbReference type="ChEBI" id="CHEBI:57318"/>
        <dbReference type="ChEBI" id="CHEBI:57540"/>
        <dbReference type="ChEBI" id="CHEBI:57945"/>
        <dbReference type="ChEBI" id="CHEBI:90726"/>
        <dbReference type="EC" id="1.1.1.35"/>
    </reaction>
</comment>
<comment type="catalytic activity">
    <reaction evidence="1">
        <text>a (3S)-3-hydroxyacyl-CoA = a (2E)-enoyl-CoA + H2O</text>
        <dbReference type="Rhea" id="RHEA:16105"/>
        <dbReference type="ChEBI" id="CHEBI:15377"/>
        <dbReference type="ChEBI" id="CHEBI:57318"/>
        <dbReference type="ChEBI" id="CHEBI:58856"/>
        <dbReference type="EC" id="4.2.1.17"/>
    </reaction>
</comment>
<comment type="catalytic activity">
    <reaction evidence="1">
        <text>a 4-saturated-(3S)-3-hydroxyacyl-CoA = a (3E)-enoyl-CoA + H2O</text>
        <dbReference type="Rhea" id="RHEA:20724"/>
        <dbReference type="ChEBI" id="CHEBI:15377"/>
        <dbReference type="ChEBI" id="CHEBI:58521"/>
        <dbReference type="ChEBI" id="CHEBI:137480"/>
        <dbReference type="EC" id="4.2.1.17"/>
    </reaction>
</comment>
<comment type="catalytic activity">
    <reaction evidence="1">
        <text>(3S)-3-hydroxybutanoyl-CoA = (3R)-3-hydroxybutanoyl-CoA</text>
        <dbReference type="Rhea" id="RHEA:21760"/>
        <dbReference type="ChEBI" id="CHEBI:57315"/>
        <dbReference type="ChEBI" id="CHEBI:57316"/>
        <dbReference type="EC" id="5.1.2.3"/>
    </reaction>
</comment>
<comment type="catalytic activity">
    <reaction evidence="1">
        <text>a (3Z)-enoyl-CoA = a 4-saturated (2E)-enoyl-CoA</text>
        <dbReference type="Rhea" id="RHEA:45900"/>
        <dbReference type="ChEBI" id="CHEBI:85097"/>
        <dbReference type="ChEBI" id="CHEBI:85489"/>
        <dbReference type="EC" id="5.3.3.8"/>
    </reaction>
</comment>
<comment type="catalytic activity">
    <reaction evidence="1">
        <text>a (3E)-enoyl-CoA = a 4-saturated (2E)-enoyl-CoA</text>
        <dbReference type="Rhea" id="RHEA:45228"/>
        <dbReference type="ChEBI" id="CHEBI:58521"/>
        <dbReference type="ChEBI" id="CHEBI:85097"/>
        <dbReference type="EC" id="5.3.3.8"/>
    </reaction>
</comment>
<comment type="pathway">
    <text evidence="1">Lipid metabolism; fatty acid beta-oxidation.</text>
</comment>
<comment type="subunit">
    <text evidence="1">Heterotetramer of two alpha chains (FadB) and two beta chains (FadA).</text>
</comment>
<comment type="similarity">
    <text evidence="1">In the N-terminal section; belongs to the enoyl-CoA hydratase/isomerase family.</text>
</comment>
<comment type="similarity">
    <text evidence="1">In the C-terminal section; belongs to the 3-hydroxyacyl-CoA dehydrogenase family.</text>
</comment>
<dbReference type="EC" id="4.2.1.17" evidence="1"/>
<dbReference type="EC" id="5.1.2.3" evidence="1"/>
<dbReference type="EC" id="5.3.3.8" evidence="1"/>
<dbReference type="EC" id="1.1.1.35" evidence="1"/>
<dbReference type="EMBL" id="CU459141">
    <property type="protein sequence ID" value="CAM88259.1"/>
    <property type="molecule type" value="Genomic_DNA"/>
</dbReference>
<dbReference type="RefSeq" id="WP_000580942.1">
    <property type="nucleotide sequence ID" value="NZ_JBDGFB010000003.1"/>
</dbReference>
<dbReference type="SMR" id="B0VE45"/>
<dbReference type="EnsemblBacteria" id="CAM88259">
    <property type="protein sequence ID" value="CAM88259"/>
    <property type="gene ID" value="ABAYE3470"/>
</dbReference>
<dbReference type="KEGG" id="aby:ABAYE3470"/>
<dbReference type="HOGENOM" id="CLU_009834_16_3_6"/>
<dbReference type="UniPathway" id="UPA00659"/>
<dbReference type="GO" id="GO:0036125">
    <property type="term" value="C:fatty acid beta-oxidation multienzyme complex"/>
    <property type="evidence" value="ECO:0007669"/>
    <property type="project" value="InterPro"/>
</dbReference>
<dbReference type="GO" id="GO:0008692">
    <property type="term" value="F:3-hydroxybutyryl-CoA epimerase activity"/>
    <property type="evidence" value="ECO:0007669"/>
    <property type="project" value="UniProtKB-UniRule"/>
</dbReference>
<dbReference type="GO" id="GO:0004165">
    <property type="term" value="F:delta(3)-delta(2)-enoyl-CoA isomerase activity"/>
    <property type="evidence" value="ECO:0007669"/>
    <property type="project" value="UniProtKB-UniRule"/>
</dbReference>
<dbReference type="GO" id="GO:0004300">
    <property type="term" value="F:enoyl-CoA hydratase activity"/>
    <property type="evidence" value="ECO:0007669"/>
    <property type="project" value="UniProtKB-UniRule"/>
</dbReference>
<dbReference type="GO" id="GO:0016509">
    <property type="term" value="F:long-chain-3-hydroxyacyl-CoA dehydrogenase activity"/>
    <property type="evidence" value="ECO:0007669"/>
    <property type="project" value="TreeGrafter"/>
</dbReference>
<dbReference type="GO" id="GO:0070403">
    <property type="term" value="F:NAD+ binding"/>
    <property type="evidence" value="ECO:0007669"/>
    <property type="project" value="InterPro"/>
</dbReference>
<dbReference type="GO" id="GO:0006635">
    <property type="term" value="P:fatty acid beta-oxidation"/>
    <property type="evidence" value="ECO:0007669"/>
    <property type="project" value="UniProtKB-UniRule"/>
</dbReference>
<dbReference type="CDD" id="cd06558">
    <property type="entry name" value="crotonase-like"/>
    <property type="match status" value="1"/>
</dbReference>
<dbReference type="FunFam" id="3.40.50.720:FF:000009">
    <property type="entry name" value="Fatty oxidation complex, alpha subunit"/>
    <property type="match status" value="1"/>
</dbReference>
<dbReference type="Gene3D" id="1.10.1040.50">
    <property type="match status" value="1"/>
</dbReference>
<dbReference type="Gene3D" id="3.90.226.10">
    <property type="entry name" value="2-enoyl-CoA Hydratase, Chain A, domain 1"/>
    <property type="match status" value="1"/>
</dbReference>
<dbReference type="Gene3D" id="3.40.50.720">
    <property type="entry name" value="NAD(P)-binding Rossmann-like Domain"/>
    <property type="match status" value="1"/>
</dbReference>
<dbReference type="HAMAP" id="MF_01621">
    <property type="entry name" value="FadB"/>
    <property type="match status" value="1"/>
</dbReference>
<dbReference type="InterPro" id="IPR006180">
    <property type="entry name" value="3-OHacyl-CoA_DH_CS"/>
</dbReference>
<dbReference type="InterPro" id="IPR006176">
    <property type="entry name" value="3-OHacyl-CoA_DH_NAD-bd"/>
</dbReference>
<dbReference type="InterPro" id="IPR006108">
    <property type="entry name" value="3HC_DH_C"/>
</dbReference>
<dbReference type="InterPro" id="IPR008927">
    <property type="entry name" value="6-PGluconate_DH-like_C_sf"/>
</dbReference>
<dbReference type="InterPro" id="IPR029045">
    <property type="entry name" value="ClpP/crotonase-like_dom_sf"/>
</dbReference>
<dbReference type="InterPro" id="IPR018376">
    <property type="entry name" value="Enoyl-CoA_hyd/isom_CS"/>
</dbReference>
<dbReference type="InterPro" id="IPR001753">
    <property type="entry name" value="Enoyl-CoA_hydra/iso"/>
</dbReference>
<dbReference type="InterPro" id="IPR050136">
    <property type="entry name" value="FA_oxidation_alpha_subunit"/>
</dbReference>
<dbReference type="InterPro" id="IPR012799">
    <property type="entry name" value="FadB"/>
</dbReference>
<dbReference type="InterPro" id="IPR036291">
    <property type="entry name" value="NAD(P)-bd_dom_sf"/>
</dbReference>
<dbReference type="NCBIfam" id="TIGR02437">
    <property type="entry name" value="FadB"/>
    <property type="match status" value="1"/>
</dbReference>
<dbReference type="NCBIfam" id="NF008727">
    <property type="entry name" value="PRK11730.1"/>
    <property type="match status" value="1"/>
</dbReference>
<dbReference type="PANTHER" id="PTHR43612">
    <property type="entry name" value="TRIFUNCTIONAL ENZYME SUBUNIT ALPHA"/>
    <property type="match status" value="1"/>
</dbReference>
<dbReference type="PANTHER" id="PTHR43612:SF3">
    <property type="entry name" value="TRIFUNCTIONAL ENZYME SUBUNIT ALPHA, MITOCHONDRIAL"/>
    <property type="match status" value="1"/>
</dbReference>
<dbReference type="Pfam" id="PF00725">
    <property type="entry name" value="3HCDH"/>
    <property type="match status" value="1"/>
</dbReference>
<dbReference type="Pfam" id="PF02737">
    <property type="entry name" value="3HCDH_N"/>
    <property type="match status" value="1"/>
</dbReference>
<dbReference type="Pfam" id="PF00378">
    <property type="entry name" value="ECH_1"/>
    <property type="match status" value="1"/>
</dbReference>
<dbReference type="SUPFAM" id="SSF48179">
    <property type="entry name" value="6-phosphogluconate dehydrogenase C-terminal domain-like"/>
    <property type="match status" value="2"/>
</dbReference>
<dbReference type="SUPFAM" id="SSF52096">
    <property type="entry name" value="ClpP/crotonase"/>
    <property type="match status" value="1"/>
</dbReference>
<dbReference type="SUPFAM" id="SSF51735">
    <property type="entry name" value="NAD(P)-binding Rossmann-fold domains"/>
    <property type="match status" value="1"/>
</dbReference>
<dbReference type="PROSITE" id="PS00067">
    <property type="entry name" value="3HCDH"/>
    <property type="match status" value="1"/>
</dbReference>
<dbReference type="PROSITE" id="PS00166">
    <property type="entry name" value="ENOYL_COA_HYDRATASE"/>
    <property type="match status" value="1"/>
</dbReference>
<organism>
    <name type="scientific">Acinetobacter baumannii (strain AYE)</name>
    <dbReference type="NCBI Taxonomy" id="509173"/>
    <lineage>
        <taxon>Bacteria</taxon>
        <taxon>Pseudomonadati</taxon>
        <taxon>Pseudomonadota</taxon>
        <taxon>Gammaproteobacteria</taxon>
        <taxon>Moraxellales</taxon>
        <taxon>Moraxellaceae</taxon>
        <taxon>Acinetobacter</taxon>
        <taxon>Acinetobacter calcoaceticus/baumannii complex</taxon>
    </lineage>
</organism>
<gene>
    <name evidence="1" type="primary">fadB</name>
    <name type="ordered locus">ABAYE3470</name>
</gene>
<keyword id="KW-0276">Fatty acid metabolism</keyword>
<keyword id="KW-0413">Isomerase</keyword>
<keyword id="KW-0442">Lipid degradation</keyword>
<keyword id="KW-0443">Lipid metabolism</keyword>
<keyword id="KW-0456">Lyase</keyword>
<keyword id="KW-0511">Multifunctional enzyme</keyword>
<keyword id="KW-0520">NAD</keyword>
<keyword id="KW-0560">Oxidoreductase</keyword>
<sequence length="717" mass="77874">MIHAGNAITVQMLADGIAEFRFDLQGESVNKFNRATIEDFKAAIAAVKANNDIKGLVVTSGKSTFIVGADITEFGQNFAQGEKAIVDWLMPVHEIFNSFEDLDLPKVAAINGMALGGGFEMCLVCDYRVMSEAAQVGLPEIKLGIYPGFGGSVRLSRLIGIDNAVEWMAMATPKKPAAALKDGAVDAVVAADKLLDAATDLVKQAISGRLNWKAKRQEKLEAVKLNPLEQMMAFNTAKGAVLAKANPAQYPAPKLLLDSLQAGASLARDEALKAEAEGFAKAAVTPQAEALIGLFINDQVVKKASKQHEKGAHPVNQAAVLGAGIMGGGIAYQAASKGTPIIMKDIGNPQLALGMKEANNLLTKQVERKKMKPVQMGETLARIRPTLSYEEFKEVDIVIEAVTENPKVKEIVLAETEKNVRENTIIASNTSTISITRLAKALQRPENFVGMHFFNPVHMMPLVEVIRGEKTSEEAIATTVVLAQKMGKTPIVVNDCPGFLVNRVLFPYFGAFDLLVKDGADFQQIDNVMSKFGWPMGPAYLIDVVGIDTGVHGAEVMAEGFPDRMKPDYKGAIEAMYEAKRLGQKNDVGFYKYELDKKGKKAKTVDPTAYEVIAPFVTGEKREFDNQEIIDRMMLALCNETVRCLEDNIVATASEADMAMIMGIGFPPFRGGPCRYIDQTGVAEYVALCDKYAHLGKAYEAPQMLRDMAANNKKFYG</sequence>
<reference key="1">
    <citation type="journal article" date="2008" name="PLoS ONE">
        <title>Comparative analysis of Acinetobacters: three genomes for three lifestyles.</title>
        <authorList>
            <person name="Vallenet D."/>
            <person name="Nordmann P."/>
            <person name="Barbe V."/>
            <person name="Poirel L."/>
            <person name="Mangenot S."/>
            <person name="Bataille E."/>
            <person name="Dossat C."/>
            <person name="Gas S."/>
            <person name="Kreimeyer A."/>
            <person name="Lenoble P."/>
            <person name="Oztas S."/>
            <person name="Poulain J."/>
            <person name="Segurens B."/>
            <person name="Robert C."/>
            <person name="Abergel C."/>
            <person name="Claverie J.-M."/>
            <person name="Raoult D."/>
            <person name="Medigue C."/>
            <person name="Weissenbach J."/>
            <person name="Cruveiller S."/>
        </authorList>
    </citation>
    <scope>NUCLEOTIDE SEQUENCE [LARGE SCALE GENOMIC DNA]</scope>
    <source>
        <strain>AYE</strain>
    </source>
</reference>
<protein>
    <recommendedName>
        <fullName evidence="1">Fatty acid oxidation complex subunit alpha</fullName>
    </recommendedName>
    <domain>
        <recommendedName>
            <fullName evidence="1">Enoyl-CoA hydratase/Delta(3)-cis-Delta(2)-trans-enoyl-CoA isomerase/3-hydroxybutyryl-CoA epimerase</fullName>
            <ecNumber evidence="1">4.2.1.17</ecNumber>
            <ecNumber evidence="1">5.1.2.3</ecNumber>
            <ecNumber evidence="1">5.3.3.8</ecNumber>
        </recommendedName>
    </domain>
    <domain>
        <recommendedName>
            <fullName evidence="1">3-hydroxyacyl-CoA dehydrogenase</fullName>
            <ecNumber evidence="1">1.1.1.35</ecNumber>
        </recommendedName>
    </domain>
</protein>
<feature type="chain" id="PRO_1000186030" description="Fatty acid oxidation complex subunit alpha">
    <location>
        <begin position="1"/>
        <end position="717"/>
    </location>
</feature>
<feature type="region of interest" description="Enoyl-CoA hydratase/isomerase" evidence="1">
    <location>
        <begin position="1"/>
        <end position="190"/>
    </location>
</feature>
<feature type="region of interest" description="3-hydroxyacyl-CoA dehydrogenase" evidence="1">
    <location>
        <begin position="313"/>
        <end position="717"/>
    </location>
</feature>
<feature type="active site" description="For 3-hydroxyacyl-CoA dehydrogenase activity" evidence="1">
    <location>
        <position position="452"/>
    </location>
</feature>
<feature type="binding site" evidence="1">
    <location>
        <position position="298"/>
    </location>
    <ligand>
        <name>substrate</name>
    </ligand>
</feature>
<feature type="binding site" evidence="1">
    <location>
        <position position="326"/>
    </location>
    <ligand>
        <name>NAD(+)</name>
        <dbReference type="ChEBI" id="CHEBI:57540"/>
    </ligand>
</feature>
<feature type="binding site" evidence="1">
    <location>
        <position position="345"/>
    </location>
    <ligand>
        <name>NAD(+)</name>
        <dbReference type="ChEBI" id="CHEBI:57540"/>
    </ligand>
</feature>
<feature type="binding site" evidence="1">
    <location>
        <begin position="402"/>
        <end position="404"/>
    </location>
    <ligand>
        <name>NAD(+)</name>
        <dbReference type="ChEBI" id="CHEBI:57540"/>
    </ligand>
</feature>
<feature type="binding site" evidence="1">
    <location>
        <position position="409"/>
    </location>
    <ligand>
        <name>NAD(+)</name>
        <dbReference type="ChEBI" id="CHEBI:57540"/>
    </ligand>
</feature>
<feature type="binding site" evidence="1">
    <location>
        <position position="431"/>
    </location>
    <ligand>
        <name>NAD(+)</name>
        <dbReference type="ChEBI" id="CHEBI:57540"/>
    </ligand>
</feature>
<feature type="binding site" evidence="1">
    <location>
        <position position="455"/>
    </location>
    <ligand>
        <name>NAD(+)</name>
        <dbReference type="ChEBI" id="CHEBI:57540"/>
    </ligand>
</feature>
<feature type="binding site" evidence="1">
    <location>
        <position position="502"/>
    </location>
    <ligand>
        <name>substrate</name>
    </ligand>
</feature>
<feature type="site" description="Important for catalytic activity" evidence="1">
    <location>
        <position position="120"/>
    </location>
</feature>
<feature type="site" description="Important for catalytic activity" evidence="1">
    <location>
        <position position="140"/>
    </location>
</feature>
<proteinExistence type="inferred from homology"/>
<name>FADB_ACIBY</name>